<protein>
    <recommendedName>
        <fullName>Pannexin-1</fullName>
    </recommendedName>
    <component>
        <recommendedName>
            <fullName evidence="9">Caspase-activated pannexin-1</fullName>
            <shortName evidence="10">Caspase-activated PANX1</shortName>
        </recommendedName>
    </component>
</protein>
<keyword id="KW-0002">3D-structure</keyword>
<keyword id="KW-0106">Calcium</keyword>
<keyword id="KW-0107">Calcium channel</keyword>
<keyword id="KW-0109">Calcium transport</keyword>
<keyword id="KW-1003">Cell membrane</keyword>
<keyword id="KW-1015">Disulfide bond</keyword>
<keyword id="KW-0256">Endoplasmic reticulum</keyword>
<keyword id="KW-0325">Glycoprotein</keyword>
<keyword id="KW-0407">Ion channel</keyword>
<keyword id="KW-0406">Ion transport</keyword>
<keyword id="KW-0472">Membrane</keyword>
<keyword id="KW-0597">Phosphoprotein</keyword>
<keyword id="KW-1185">Reference proteome</keyword>
<keyword id="KW-0702">S-nitrosylation</keyword>
<keyword id="KW-0812">Transmembrane</keyword>
<keyword id="KW-1133">Transmembrane helix</keyword>
<keyword id="KW-0813">Transport</keyword>
<gene>
    <name evidence="12" type="primary">Panx1</name>
</gene>
<organism>
    <name type="scientific">Mus musculus</name>
    <name type="common">Mouse</name>
    <dbReference type="NCBI Taxonomy" id="10090"/>
    <lineage>
        <taxon>Eukaryota</taxon>
        <taxon>Metazoa</taxon>
        <taxon>Chordata</taxon>
        <taxon>Craniata</taxon>
        <taxon>Vertebrata</taxon>
        <taxon>Euteleostomi</taxon>
        <taxon>Mammalia</taxon>
        <taxon>Eutheria</taxon>
        <taxon>Euarchontoglires</taxon>
        <taxon>Glires</taxon>
        <taxon>Rodentia</taxon>
        <taxon>Myomorpha</taxon>
        <taxon>Muroidea</taxon>
        <taxon>Muridae</taxon>
        <taxon>Murinae</taxon>
        <taxon>Mus</taxon>
        <taxon>Mus</taxon>
    </lineage>
</organism>
<evidence type="ECO:0000250" key="1">
    <source>
        <dbReference type="UniProtKB" id="Q96RD7"/>
    </source>
</evidence>
<evidence type="ECO:0000255" key="2"/>
<evidence type="ECO:0000255" key="3">
    <source>
        <dbReference type="PROSITE-ProRule" id="PRU00351"/>
    </source>
</evidence>
<evidence type="ECO:0000269" key="4">
    <source>
    </source>
</evidence>
<evidence type="ECO:0000269" key="5">
    <source>
    </source>
</evidence>
<evidence type="ECO:0000269" key="6">
    <source>
    </source>
</evidence>
<evidence type="ECO:0000269" key="7">
    <source>
    </source>
</evidence>
<evidence type="ECO:0000269" key="8">
    <source>
    </source>
</evidence>
<evidence type="ECO:0000303" key="9">
    <source>
    </source>
</evidence>
<evidence type="ECO:0000305" key="10"/>
<evidence type="ECO:0000305" key="11">
    <source>
    </source>
</evidence>
<evidence type="ECO:0000312" key="12">
    <source>
        <dbReference type="MGI" id="MGI:1860055"/>
    </source>
</evidence>
<evidence type="ECO:0007829" key="13">
    <source>
        <dbReference type="PDB" id="8A3B"/>
    </source>
</evidence>
<comment type="function">
    <text evidence="1 5 7 8">Ion channel involved in a variety of physiological functions such as blood pressure regulation, apoptotic cell clearance and oogenesis (PubMed:30814251). Forms anion-selective channels with relatively low conductance and an order of permeabilities: nitrate&gt;iodide&gt;chlroride&gt;&gt;aspartate=glutamate=gluconate (PubMed:22311122). Can release ATP upon activation through phosphorylation or cleavage at C-terminus (PubMed:32238926). May play a role as a Ca(2+)-leak channel to regulate ER Ca(2+) homeostasis (By similarity).</text>
</comment>
<comment type="function">
    <molecule>Caspase-activated pannexin-1</molecule>
    <text evidence="8">During apoptosis and after cleavage by caspases of the C-terminal tail, acts as a plasma membrane channel which mediates the regulated release of find-me signals, such as nucleotides ATP and UTP, and selective plasme membrane permeability.</text>
</comment>
<comment type="catalytic activity">
    <reaction evidence="5">
        <text>chloride(in) = chloride(out)</text>
        <dbReference type="Rhea" id="RHEA:29823"/>
        <dbReference type="ChEBI" id="CHEBI:17996"/>
    </reaction>
</comment>
<comment type="catalytic activity">
    <reaction evidence="5">
        <text>iodide(out) = iodide(in)</text>
        <dbReference type="Rhea" id="RHEA:66324"/>
        <dbReference type="ChEBI" id="CHEBI:16382"/>
    </reaction>
</comment>
<comment type="catalytic activity">
    <reaction evidence="1">
        <text>Ca(2+)(in) = Ca(2+)(out)</text>
        <dbReference type="Rhea" id="RHEA:29671"/>
        <dbReference type="ChEBI" id="CHEBI:29108"/>
    </reaction>
</comment>
<comment type="catalytic activity">
    <reaction evidence="7">
        <text>ATP(in) = ATP(out)</text>
        <dbReference type="Rhea" id="RHEA:75687"/>
        <dbReference type="ChEBI" id="CHEBI:30616"/>
    </reaction>
</comment>
<comment type="catalytic activity">
    <reaction evidence="1">
        <text>K(+)(in) = K(+)(out)</text>
        <dbReference type="Rhea" id="RHEA:29463"/>
        <dbReference type="ChEBI" id="CHEBI:29103"/>
    </reaction>
</comment>
<comment type="catalytic activity">
    <reaction evidence="1">
        <text>Na(+)(in) = Na(+)(out)</text>
        <dbReference type="Rhea" id="RHEA:34963"/>
        <dbReference type="ChEBI" id="CHEBI:29101"/>
    </reaction>
</comment>
<comment type="catalytic activity">
    <reaction evidence="5">
        <text>nitrate(in) = nitrate(out)</text>
        <dbReference type="Rhea" id="RHEA:34923"/>
        <dbReference type="ChEBI" id="CHEBI:17632"/>
    </reaction>
</comment>
<comment type="catalytic activity">
    <reaction evidence="5">
        <text>L-aspartate(out) = L-aspartate(in)</text>
        <dbReference type="Rhea" id="RHEA:66332"/>
        <dbReference type="ChEBI" id="CHEBI:29991"/>
    </reaction>
</comment>
<comment type="catalytic activity">
    <reaction evidence="5">
        <text>L-glutamate(out) = L-glutamate(in)</text>
        <dbReference type="Rhea" id="RHEA:66336"/>
        <dbReference type="ChEBI" id="CHEBI:29985"/>
    </reaction>
</comment>
<comment type="catalytic activity">
    <reaction evidence="5">
        <text>D-gluconate(in) = D-gluconate(out)</text>
        <dbReference type="Rhea" id="RHEA:76139"/>
        <dbReference type="ChEBI" id="CHEBI:18391"/>
    </reaction>
</comment>
<comment type="catalytic activity">
    <molecule>Caspase-activated pannexin-1</molecule>
    <reaction evidence="8">
        <text>ATP(in) = ATP(out)</text>
        <dbReference type="Rhea" id="RHEA:75687"/>
        <dbReference type="ChEBI" id="CHEBI:30616"/>
    </reaction>
</comment>
<comment type="catalytic activity">
    <molecule>Caspase-activated pannexin-1</molecule>
    <reaction evidence="1">
        <text>spermidine(in) = spermidine(out)</text>
        <dbReference type="Rhea" id="RHEA:35039"/>
        <dbReference type="ChEBI" id="CHEBI:57834"/>
    </reaction>
</comment>
<comment type="subunit">
    <text evidence="1">Homoheptameric.</text>
</comment>
<comment type="interaction">
    <interactant intactId="EBI-6272917">
        <id>Q9JIP4</id>
    </interactant>
    <interactant intactId="EBI-7261133">
        <id>P97382</id>
        <label>Kcnab3</label>
    </interactant>
    <organismsDiffer>false</organismsDiffer>
    <experiments>2</experiments>
</comment>
<comment type="subcellular location">
    <subcellularLocation>
        <location evidence="5 7">Cell membrane</location>
        <topology evidence="3">Multi-pass membrane protein</topology>
    </subcellularLocation>
    <subcellularLocation>
        <location evidence="1">Endoplasmic reticulum membrane</location>
        <topology evidence="3">Multi-pass membrane protein</topology>
    </subcellularLocation>
</comment>
<comment type="tissue specificity">
    <text>Widely expressed, including in cartilage, skin, spleen and brain.</text>
</comment>
<comment type="PTM">
    <text evidence="6">S-nitrosylation inhibits channel currents and ATP release.</text>
</comment>
<comment type="PTM">
    <text evidence="1 4">N-glycosylation may play a role in cell surface targeting (PubMed:17925379). Exists in three glycosylation states: non-glycosylated (GLY0), high-mannose glycosylated (GLY1), and fully mature glycosylated (GLY2) (By similarity).</text>
</comment>
<comment type="PTM">
    <text evidence="7">Phosphorylated at Tyr-198 by SRC. Phosphorylation activates ATP release. Constitutively phosphorylated in vascular smooth muscle cells.</text>
</comment>
<comment type="PTM">
    <text evidence="1">Cleaved by CASP3 and CASP7 during apoptosis. Cleavage opens the channel for the release of metabolites and induces plasma membrane permeability during apoptosis.</text>
</comment>
<comment type="similarity">
    <text evidence="3">Belongs to the pannexin family.</text>
</comment>
<dbReference type="EMBL" id="AF207817">
    <property type="protein sequence ID" value="AAF75838.1"/>
    <property type="molecule type" value="mRNA"/>
</dbReference>
<dbReference type="EMBL" id="AK014033">
    <property type="protein sequence ID" value="BAB29125.1"/>
    <property type="molecule type" value="mRNA"/>
</dbReference>
<dbReference type="EMBL" id="AK053871">
    <property type="protein sequence ID" value="BAC35567.1"/>
    <property type="molecule type" value="mRNA"/>
</dbReference>
<dbReference type="EMBL" id="AK089764">
    <property type="protein sequence ID" value="BAC40956.1"/>
    <property type="molecule type" value="mRNA"/>
</dbReference>
<dbReference type="EMBL" id="CH466522">
    <property type="protein sequence ID" value="EDL25014.1"/>
    <property type="molecule type" value="Genomic_DNA"/>
</dbReference>
<dbReference type="EMBL" id="BC049074">
    <property type="protein sequence ID" value="AAH49074.1"/>
    <property type="molecule type" value="mRNA"/>
</dbReference>
<dbReference type="CCDS" id="CCDS22832.1"/>
<dbReference type="RefSeq" id="NP_062355.2">
    <property type="nucleotide sequence ID" value="NM_019482.2"/>
</dbReference>
<dbReference type="PDB" id="8A3B">
    <property type="method" value="EM"/>
    <property type="resolution" value="3.10 A"/>
    <property type="chains" value="A/B/C/D/E/F/G=1-426"/>
</dbReference>
<dbReference type="PDBsum" id="8A3B"/>
<dbReference type="EMDB" id="EMD-15110"/>
<dbReference type="SMR" id="Q9JIP4"/>
<dbReference type="FunCoup" id="Q9JIP4">
    <property type="interactions" value="855"/>
</dbReference>
<dbReference type="IntAct" id="Q9JIP4">
    <property type="interactions" value="4"/>
</dbReference>
<dbReference type="MINT" id="Q9JIP4"/>
<dbReference type="STRING" id="10090.ENSMUSP00000126405"/>
<dbReference type="BindingDB" id="Q9JIP4"/>
<dbReference type="ChEMBL" id="CHEMBL4879520"/>
<dbReference type="DrugCentral" id="Q9JIP4"/>
<dbReference type="TCDB" id="1.A.25.2.5">
    <property type="family name" value="the gap junction-forming innexin (innexin) family"/>
</dbReference>
<dbReference type="GlyCosmos" id="Q9JIP4">
    <property type="glycosylation" value="1 site, No reported glycans"/>
</dbReference>
<dbReference type="GlyGen" id="Q9JIP4">
    <property type="glycosylation" value="1 site, 1 N-linked glycan (1 site)"/>
</dbReference>
<dbReference type="iPTMnet" id="Q9JIP4"/>
<dbReference type="PhosphoSitePlus" id="Q9JIP4"/>
<dbReference type="PaxDb" id="10090-ENSMUSP00000126405"/>
<dbReference type="ProteomicsDB" id="294158"/>
<dbReference type="ABCD" id="Q9JIP4">
    <property type="antibodies" value="9 sequenced antibodies"/>
</dbReference>
<dbReference type="Antibodypedia" id="1920">
    <property type="antibodies" value="268 antibodies from 39 providers"/>
</dbReference>
<dbReference type="DNASU" id="55991"/>
<dbReference type="Ensembl" id="ENSMUST00000164273.9">
    <property type="protein sequence ID" value="ENSMUSP00000126405.2"/>
    <property type="gene ID" value="ENSMUSG00000031934.15"/>
</dbReference>
<dbReference type="GeneID" id="55991"/>
<dbReference type="KEGG" id="mmu:55991"/>
<dbReference type="UCSC" id="uc009ofi.1">
    <property type="organism name" value="mouse"/>
</dbReference>
<dbReference type="AGR" id="MGI:1860055"/>
<dbReference type="CTD" id="24145"/>
<dbReference type="MGI" id="MGI:1860055">
    <property type="gene designation" value="Panx1"/>
</dbReference>
<dbReference type="VEuPathDB" id="HostDB:ENSMUSG00000031934"/>
<dbReference type="eggNOG" id="ENOG502QT58">
    <property type="taxonomic scope" value="Eukaryota"/>
</dbReference>
<dbReference type="GeneTree" id="ENSGT00940000153972"/>
<dbReference type="HOGENOM" id="CLU_050054_1_0_1"/>
<dbReference type="InParanoid" id="Q9JIP4"/>
<dbReference type="OMA" id="IPDRFQC"/>
<dbReference type="OrthoDB" id="5867527at2759"/>
<dbReference type="PhylomeDB" id="Q9JIP4"/>
<dbReference type="TreeFam" id="TF333142"/>
<dbReference type="Reactome" id="R-MMU-112303">
    <property type="pathway name" value="Electric Transmission Across Gap Junctions"/>
</dbReference>
<dbReference type="Reactome" id="R-MMU-844456">
    <property type="pathway name" value="The NLRP3 inflammasome"/>
</dbReference>
<dbReference type="BioGRID-ORCS" id="55991">
    <property type="hits" value="5 hits in 80 CRISPR screens"/>
</dbReference>
<dbReference type="ChiTaRS" id="Panx1">
    <property type="organism name" value="mouse"/>
</dbReference>
<dbReference type="PRO" id="PR:Q9JIP4"/>
<dbReference type="Proteomes" id="UP000000589">
    <property type="component" value="Chromosome 9"/>
</dbReference>
<dbReference type="RNAct" id="Q9JIP4">
    <property type="molecule type" value="protein"/>
</dbReference>
<dbReference type="Bgee" id="ENSMUSG00000031934">
    <property type="expression patterns" value="Expressed in floor plate of midbrain and 225 other cell types or tissues"/>
</dbReference>
<dbReference type="ExpressionAtlas" id="Q9JIP4">
    <property type="expression patterns" value="baseline and differential"/>
</dbReference>
<dbReference type="GO" id="GO:0032059">
    <property type="term" value="C:bleb"/>
    <property type="evidence" value="ECO:0007669"/>
    <property type="project" value="Ensembl"/>
</dbReference>
<dbReference type="GO" id="GO:0005783">
    <property type="term" value="C:endoplasmic reticulum"/>
    <property type="evidence" value="ECO:0000250"/>
    <property type="project" value="UniProtKB"/>
</dbReference>
<dbReference type="GO" id="GO:0005789">
    <property type="term" value="C:endoplasmic reticulum membrane"/>
    <property type="evidence" value="ECO:0007669"/>
    <property type="project" value="UniProtKB-SubCell"/>
</dbReference>
<dbReference type="GO" id="GO:0005921">
    <property type="term" value="C:gap junction"/>
    <property type="evidence" value="ECO:0000250"/>
    <property type="project" value="UniProtKB"/>
</dbReference>
<dbReference type="GO" id="GO:0005886">
    <property type="term" value="C:plasma membrane"/>
    <property type="evidence" value="ECO:0000314"/>
    <property type="project" value="UniProtKB"/>
</dbReference>
<dbReference type="GO" id="GO:0032991">
    <property type="term" value="C:protein-containing complex"/>
    <property type="evidence" value="ECO:0007669"/>
    <property type="project" value="Ensembl"/>
</dbReference>
<dbReference type="GO" id="GO:0003779">
    <property type="term" value="F:actin binding"/>
    <property type="evidence" value="ECO:0000353"/>
    <property type="project" value="MGI"/>
</dbReference>
<dbReference type="GO" id="GO:0051015">
    <property type="term" value="F:actin filament binding"/>
    <property type="evidence" value="ECO:0000314"/>
    <property type="project" value="MGI"/>
</dbReference>
<dbReference type="GO" id="GO:0005347">
    <property type="term" value="F:ATP transmembrane transporter activity"/>
    <property type="evidence" value="ECO:0000250"/>
    <property type="project" value="UniProtKB"/>
</dbReference>
<dbReference type="GO" id="GO:0005262">
    <property type="term" value="F:calcium channel activity"/>
    <property type="evidence" value="ECO:0000250"/>
    <property type="project" value="UniProtKB"/>
</dbReference>
<dbReference type="GO" id="GO:0005243">
    <property type="term" value="F:gap junction channel activity"/>
    <property type="evidence" value="ECO:0007669"/>
    <property type="project" value="Ensembl"/>
</dbReference>
<dbReference type="GO" id="GO:0022840">
    <property type="term" value="F:leak channel activity"/>
    <property type="evidence" value="ECO:0000250"/>
    <property type="project" value="UniProtKB"/>
</dbReference>
<dbReference type="GO" id="GO:0005253">
    <property type="term" value="F:monoatomic anion channel activity"/>
    <property type="evidence" value="ECO:0000314"/>
    <property type="project" value="UniProtKB"/>
</dbReference>
<dbReference type="GO" id="GO:0002020">
    <property type="term" value="F:protease binding"/>
    <property type="evidence" value="ECO:0007669"/>
    <property type="project" value="Ensembl"/>
</dbReference>
<dbReference type="GO" id="GO:0097110">
    <property type="term" value="F:scaffold protein binding"/>
    <property type="evidence" value="ECO:0007669"/>
    <property type="project" value="Ensembl"/>
</dbReference>
<dbReference type="GO" id="GO:0005102">
    <property type="term" value="F:signaling receptor binding"/>
    <property type="evidence" value="ECO:0007669"/>
    <property type="project" value="Ensembl"/>
</dbReference>
<dbReference type="GO" id="GO:0005198">
    <property type="term" value="F:structural molecule activity"/>
    <property type="evidence" value="ECO:0000250"/>
    <property type="project" value="UniProtKB"/>
</dbReference>
<dbReference type="GO" id="GO:0044325">
    <property type="term" value="F:transmembrane transporter binding"/>
    <property type="evidence" value="ECO:0007669"/>
    <property type="project" value="Ensembl"/>
</dbReference>
<dbReference type="GO" id="GO:0015867">
    <property type="term" value="P:ATP transport"/>
    <property type="evidence" value="ECO:0000250"/>
    <property type="project" value="UniProtKB"/>
</dbReference>
<dbReference type="GO" id="GO:0006816">
    <property type="term" value="P:calcium ion transport"/>
    <property type="evidence" value="ECO:0000250"/>
    <property type="project" value="UniProtKB"/>
</dbReference>
<dbReference type="GO" id="GO:0007267">
    <property type="term" value="P:cell-cell signaling"/>
    <property type="evidence" value="ECO:0007669"/>
    <property type="project" value="Ensembl"/>
</dbReference>
<dbReference type="GO" id="GO:0098656">
    <property type="term" value="P:monoatomic anion transmembrane transport"/>
    <property type="evidence" value="ECO:0000314"/>
    <property type="project" value="UniProtKB"/>
</dbReference>
<dbReference type="GO" id="GO:0032730">
    <property type="term" value="P:positive regulation of interleukin-1 alpha production"/>
    <property type="evidence" value="ECO:0000315"/>
    <property type="project" value="MGI"/>
</dbReference>
<dbReference type="GO" id="GO:0032731">
    <property type="term" value="P:positive regulation of interleukin-1 beta production"/>
    <property type="evidence" value="ECO:0000315"/>
    <property type="project" value="MGI"/>
</dbReference>
<dbReference type="GO" id="GO:0060907">
    <property type="term" value="P:positive regulation of macrophage cytokine production"/>
    <property type="evidence" value="ECO:0000315"/>
    <property type="project" value="MGI"/>
</dbReference>
<dbReference type="GO" id="GO:0033198">
    <property type="term" value="P:response to ATP"/>
    <property type="evidence" value="ECO:0000315"/>
    <property type="project" value="MGI"/>
</dbReference>
<dbReference type="GO" id="GO:0002931">
    <property type="term" value="P:response to ischemia"/>
    <property type="evidence" value="ECO:0000316"/>
    <property type="project" value="MGI"/>
</dbReference>
<dbReference type="InterPro" id="IPR000990">
    <property type="entry name" value="Innexin"/>
</dbReference>
<dbReference type="InterPro" id="IPR039099">
    <property type="entry name" value="Pannexin"/>
</dbReference>
<dbReference type="PANTHER" id="PTHR15759">
    <property type="entry name" value="PANNEXIN"/>
    <property type="match status" value="1"/>
</dbReference>
<dbReference type="PANTHER" id="PTHR15759:SF5">
    <property type="entry name" value="PANNEXIN-1"/>
    <property type="match status" value="1"/>
</dbReference>
<dbReference type="Pfam" id="PF00876">
    <property type="entry name" value="Innexin"/>
    <property type="match status" value="1"/>
</dbReference>
<dbReference type="PROSITE" id="PS51013">
    <property type="entry name" value="PANNEXIN"/>
    <property type="match status" value="1"/>
</dbReference>
<reference key="1">
    <citation type="journal article" date="2000" name="Curr. Biol.">
        <title>A ubiquitous family of putative gap junction molecules.</title>
        <authorList>
            <person name="Panchin Y."/>
            <person name="Kelmanson I."/>
            <person name="Matz M."/>
            <person name="Lukyanov K."/>
            <person name="Usman N."/>
            <person name="Lukyanov S."/>
        </authorList>
    </citation>
    <scope>NUCLEOTIDE SEQUENCE [MRNA]</scope>
</reference>
<reference key="2">
    <citation type="journal article" date="2005" name="Science">
        <title>The transcriptional landscape of the mammalian genome.</title>
        <authorList>
            <person name="Carninci P."/>
            <person name="Kasukawa T."/>
            <person name="Katayama S."/>
            <person name="Gough J."/>
            <person name="Frith M.C."/>
            <person name="Maeda N."/>
            <person name="Oyama R."/>
            <person name="Ravasi T."/>
            <person name="Lenhard B."/>
            <person name="Wells C."/>
            <person name="Kodzius R."/>
            <person name="Shimokawa K."/>
            <person name="Bajic V.B."/>
            <person name="Brenner S.E."/>
            <person name="Batalov S."/>
            <person name="Forrest A.R."/>
            <person name="Zavolan M."/>
            <person name="Davis M.J."/>
            <person name="Wilming L.G."/>
            <person name="Aidinis V."/>
            <person name="Allen J.E."/>
            <person name="Ambesi-Impiombato A."/>
            <person name="Apweiler R."/>
            <person name="Aturaliya R.N."/>
            <person name="Bailey T.L."/>
            <person name="Bansal M."/>
            <person name="Baxter L."/>
            <person name="Beisel K.W."/>
            <person name="Bersano T."/>
            <person name="Bono H."/>
            <person name="Chalk A.M."/>
            <person name="Chiu K.P."/>
            <person name="Choudhary V."/>
            <person name="Christoffels A."/>
            <person name="Clutterbuck D.R."/>
            <person name="Crowe M.L."/>
            <person name="Dalla E."/>
            <person name="Dalrymple B.P."/>
            <person name="de Bono B."/>
            <person name="Della Gatta G."/>
            <person name="di Bernardo D."/>
            <person name="Down T."/>
            <person name="Engstrom P."/>
            <person name="Fagiolini M."/>
            <person name="Faulkner G."/>
            <person name="Fletcher C.F."/>
            <person name="Fukushima T."/>
            <person name="Furuno M."/>
            <person name="Futaki S."/>
            <person name="Gariboldi M."/>
            <person name="Georgii-Hemming P."/>
            <person name="Gingeras T.R."/>
            <person name="Gojobori T."/>
            <person name="Green R.E."/>
            <person name="Gustincich S."/>
            <person name="Harbers M."/>
            <person name="Hayashi Y."/>
            <person name="Hensch T.K."/>
            <person name="Hirokawa N."/>
            <person name="Hill D."/>
            <person name="Huminiecki L."/>
            <person name="Iacono M."/>
            <person name="Ikeo K."/>
            <person name="Iwama A."/>
            <person name="Ishikawa T."/>
            <person name="Jakt M."/>
            <person name="Kanapin A."/>
            <person name="Katoh M."/>
            <person name="Kawasawa Y."/>
            <person name="Kelso J."/>
            <person name="Kitamura H."/>
            <person name="Kitano H."/>
            <person name="Kollias G."/>
            <person name="Krishnan S.P."/>
            <person name="Kruger A."/>
            <person name="Kummerfeld S.K."/>
            <person name="Kurochkin I.V."/>
            <person name="Lareau L.F."/>
            <person name="Lazarevic D."/>
            <person name="Lipovich L."/>
            <person name="Liu J."/>
            <person name="Liuni S."/>
            <person name="McWilliam S."/>
            <person name="Madan Babu M."/>
            <person name="Madera M."/>
            <person name="Marchionni L."/>
            <person name="Matsuda H."/>
            <person name="Matsuzawa S."/>
            <person name="Miki H."/>
            <person name="Mignone F."/>
            <person name="Miyake S."/>
            <person name="Morris K."/>
            <person name="Mottagui-Tabar S."/>
            <person name="Mulder N."/>
            <person name="Nakano N."/>
            <person name="Nakauchi H."/>
            <person name="Ng P."/>
            <person name="Nilsson R."/>
            <person name="Nishiguchi S."/>
            <person name="Nishikawa S."/>
            <person name="Nori F."/>
            <person name="Ohara O."/>
            <person name="Okazaki Y."/>
            <person name="Orlando V."/>
            <person name="Pang K.C."/>
            <person name="Pavan W.J."/>
            <person name="Pavesi G."/>
            <person name="Pesole G."/>
            <person name="Petrovsky N."/>
            <person name="Piazza S."/>
            <person name="Reed J."/>
            <person name="Reid J.F."/>
            <person name="Ring B.Z."/>
            <person name="Ringwald M."/>
            <person name="Rost B."/>
            <person name="Ruan Y."/>
            <person name="Salzberg S.L."/>
            <person name="Sandelin A."/>
            <person name="Schneider C."/>
            <person name="Schoenbach C."/>
            <person name="Sekiguchi K."/>
            <person name="Semple C.A."/>
            <person name="Seno S."/>
            <person name="Sessa L."/>
            <person name="Sheng Y."/>
            <person name="Shibata Y."/>
            <person name="Shimada H."/>
            <person name="Shimada K."/>
            <person name="Silva D."/>
            <person name="Sinclair B."/>
            <person name="Sperling S."/>
            <person name="Stupka E."/>
            <person name="Sugiura K."/>
            <person name="Sultana R."/>
            <person name="Takenaka Y."/>
            <person name="Taki K."/>
            <person name="Tammoja K."/>
            <person name="Tan S.L."/>
            <person name="Tang S."/>
            <person name="Taylor M.S."/>
            <person name="Tegner J."/>
            <person name="Teichmann S.A."/>
            <person name="Ueda H.R."/>
            <person name="van Nimwegen E."/>
            <person name="Verardo R."/>
            <person name="Wei C.L."/>
            <person name="Yagi K."/>
            <person name="Yamanishi H."/>
            <person name="Zabarovsky E."/>
            <person name="Zhu S."/>
            <person name="Zimmer A."/>
            <person name="Hide W."/>
            <person name="Bult C."/>
            <person name="Grimmond S.M."/>
            <person name="Teasdale R.D."/>
            <person name="Liu E.T."/>
            <person name="Brusic V."/>
            <person name="Quackenbush J."/>
            <person name="Wahlestedt C."/>
            <person name="Mattick J.S."/>
            <person name="Hume D.A."/>
            <person name="Kai C."/>
            <person name="Sasaki D."/>
            <person name="Tomaru Y."/>
            <person name="Fukuda S."/>
            <person name="Kanamori-Katayama M."/>
            <person name="Suzuki M."/>
            <person name="Aoki J."/>
            <person name="Arakawa T."/>
            <person name="Iida J."/>
            <person name="Imamura K."/>
            <person name="Itoh M."/>
            <person name="Kato T."/>
            <person name="Kawaji H."/>
            <person name="Kawagashira N."/>
            <person name="Kawashima T."/>
            <person name="Kojima M."/>
            <person name="Kondo S."/>
            <person name="Konno H."/>
            <person name="Nakano K."/>
            <person name="Ninomiya N."/>
            <person name="Nishio T."/>
            <person name="Okada M."/>
            <person name="Plessy C."/>
            <person name="Shibata K."/>
            <person name="Shiraki T."/>
            <person name="Suzuki S."/>
            <person name="Tagami M."/>
            <person name="Waki K."/>
            <person name="Watahiki A."/>
            <person name="Okamura-Oho Y."/>
            <person name="Suzuki H."/>
            <person name="Kawai J."/>
            <person name="Hayashizaki Y."/>
        </authorList>
    </citation>
    <scope>NUCLEOTIDE SEQUENCE [LARGE SCALE MRNA]</scope>
    <source>
        <strain>C57BL/6J</strain>
        <strain>NOD</strain>
        <tissue>Embryonic head</tissue>
        <tissue>Eye</tissue>
        <tissue>Spleen</tissue>
    </source>
</reference>
<reference key="3">
    <citation type="submission" date="2005-07" db="EMBL/GenBank/DDBJ databases">
        <authorList>
            <person name="Mural R.J."/>
            <person name="Adams M.D."/>
            <person name="Myers E.W."/>
            <person name="Smith H.O."/>
            <person name="Venter J.C."/>
        </authorList>
    </citation>
    <scope>NUCLEOTIDE SEQUENCE [LARGE SCALE GENOMIC DNA]</scope>
</reference>
<reference key="4">
    <citation type="journal article" date="2004" name="Genome Res.">
        <title>The status, quality, and expansion of the NIH full-length cDNA project: the Mammalian Gene Collection (MGC).</title>
        <authorList>
            <consortium name="The MGC Project Team"/>
        </authorList>
    </citation>
    <scope>NUCLEOTIDE SEQUENCE [LARGE SCALE MRNA]</scope>
    <source>
        <strain>C57BL/6J</strain>
        <tissue>Brain</tissue>
    </source>
</reference>
<reference key="5">
    <citation type="journal article" date="2007" name="J. Cell Sci.">
        <title>Pannexin 1 and pannexin 3 are glycoproteins that exhibit many distinct characteristics from the connexin family of gap junction proteins.</title>
        <authorList>
            <person name="Penuela S."/>
            <person name="Bhalla R."/>
            <person name="Gong X.Q."/>
            <person name="Cowan K.N."/>
            <person name="Celetti S.J."/>
            <person name="Cowan B.J."/>
            <person name="Bai D."/>
            <person name="Shao Q."/>
            <person name="Laird D.W."/>
        </authorList>
    </citation>
    <scope>GLYCOSYLATION AT ASN-254</scope>
    <scope>MUTAGENESIS OF ASN-254</scope>
</reference>
<reference key="6">
    <citation type="journal article" date="2012" name="J. Biol. Chem.">
        <title>S-nitrosylation inhibits pannexin 1 channel function.</title>
        <authorList>
            <person name="Lohman A.W."/>
            <person name="Weaver J.L."/>
            <person name="Billaud M."/>
            <person name="Sandilos J.K."/>
            <person name="Griffiths R."/>
            <person name="Straub A.C."/>
            <person name="Penuela S."/>
            <person name="Leitinger N."/>
            <person name="Laird D.W."/>
            <person name="Bayliss D.A."/>
            <person name="Isakson B.E."/>
        </authorList>
    </citation>
    <scope>S-NITROSYLATION AT CYS-40 AND CYS-346</scope>
    <scope>MUTAGENESIS OF CYS-40; CYS-346 AND CYS-426</scope>
</reference>
<reference key="7">
    <citation type="journal article" date="2012" name="Pflugers Arch.">
        <title>Pannexin 1 forms an anion-selective channel.</title>
        <authorList>
            <person name="Ma W."/>
            <person name="Compan V."/>
            <person name="Zheng W."/>
            <person name="Martin E."/>
            <person name="North R.A."/>
            <person name="Verkhratsky A."/>
            <person name="Surprenant A."/>
        </authorList>
    </citation>
    <scope>FUNCTION</scope>
    <scope>TRANSPORTER ACTIVITY</scope>
    <scope>SUBCELLULAR LOCATION</scope>
</reference>
<reference key="8">
    <citation type="journal article" date="2019" name="J. Biol. Chem.">
        <title>Constitutive SRC-mediated phosphorylation of pannexin 1 at tyrosine 198 occurs at the plasma membrane.</title>
        <authorList>
            <person name="DeLalio L.J."/>
            <person name="Billaud M."/>
            <person name="Ruddiman C.A."/>
            <person name="Johnstone S.R."/>
            <person name="Butcher J.T."/>
            <person name="Wolpe A.G."/>
            <person name="Jin X."/>
            <person name="Keller T.C.S. IV"/>
            <person name="Keller A.S."/>
            <person name="Riviere T."/>
            <person name="Good M.E."/>
            <person name="Best A.K."/>
            <person name="Lohman A.W."/>
            <person name="Swayne L.A."/>
            <person name="Penuela S."/>
            <person name="Thompson R.J."/>
            <person name="Lampe P.D."/>
            <person name="Yeager M."/>
            <person name="Isakson B.E."/>
        </authorList>
    </citation>
    <scope>FUNCTION</scope>
    <scope>PHOSPHORYLATION AT TYR-198</scope>
    <scope>TRANSPORTER ACTIVITY</scope>
    <scope>SUBCELLULAR LOCATION</scope>
</reference>
<reference key="9">
    <citation type="journal article" date="2020" name="Nature">
        <title>Metabolites released from apoptotic cells act as tissue messengers.</title>
        <authorList>
            <person name="Medina C.B."/>
            <person name="Mehrotra P."/>
            <person name="Arandjelovic S."/>
            <person name="Perry J.S.A."/>
            <person name="Guo Y."/>
            <person name="Morioka S."/>
            <person name="Barron B."/>
            <person name="Walk S.F."/>
            <person name="Ghesquiere B."/>
            <person name="Krupnick A.S."/>
            <person name="Lorenz U."/>
            <person name="Ravichandran K.S."/>
        </authorList>
    </citation>
    <scope>FUNCTION</scope>
    <scope>TRANSPORTER ACTIVITY</scope>
    <scope>CLEAVAGE</scope>
</reference>
<sequence>MAIAHLATEYVFSDFLLKEPTEPKFKGLRLELAVDKMVTCIAVGLPLLLISLAFAQEISIGTQISCFSPSSFSWRQAAFVDSYCWAAVQQKSSLQSESGNLPLWLHKFFPYILLLFAILLYLPALFWRFSAAPHLCSDLKFIMEELDKVYNRAIKAAKSARDLDLRDGPGPPGVTENVGQSLWEISESHFKYPIVEQYLKTKKNSSHLIMKYISCRLVTFVVILLACIYLSYYFSLSSLSDEFLCSIKSGVLKNDSTIPDRFQCKLIAVGIFQLLSLINLIVYALLIPVVVYTFFIPFRQKTDILKVYEILPTFDVLHFKSEGYNDLSLYNLFLEENISELKSYKCLKVLENIKSNGQGIDPMLLLTNLGMIKMDIIDGKIPTSLQTKGEDQGSQRVEFKDLDLSSEAAANNGEKNSRQRLLNPSC</sequence>
<feature type="chain" id="PRO_0000208485" description="Pannexin-1">
    <location>
        <begin position="1"/>
        <end position="426"/>
    </location>
</feature>
<feature type="chain" id="PRO_0000460042" description="Caspase-activated pannexin-1" evidence="1">
    <location>
        <begin position="1"/>
        <end position="378"/>
    </location>
</feature>
<feature type="topological domain" description="Cytoplasmic" evidence="2">
    <location>
        <begin position="1"/>
        <end position="40"/>
    </location>
</feature>
<feature type="transmembrane region" description="Helical" evidence="3">
    <location>
        <begin position="41"/>
        <end position="61"/>
    </location>
</feature>
<feature type="topological domain" description="Extracellular" evidence="2">
    <location>
        <begin position="62"/>
        <end position="106"/>
    </location>
</feature>
<feature type="transmembrane region" description="Helical" evidence="3">
    <location>
        <begin position="107"/>
        <end position="127"/>
    </location>
</feature>
<feature type="topological domain" description="Cytoplasmic" evidence="2">
    <location>
        <begin position="128"/>
        <end position="216"/>
    </location>
</feature>
<feature type="transmembrane region" description="Helical" evidence="3">
    <location>
        <begin position="217"/>
        <end position="237"/>
    </location>
</feature>
<feature type="topological domain" description="Extracellular" evidence="2">
    <location>
        <begin position="238"/>
        <end position="277"/>
    </location>
</feature>
<feature type="transmembrane region" description="Helical" evidence="3">
    <location>
        <begin position="278"/>
        <end position="298"/>
    </location>
</feature>
<feature type="topological domain" description="Cytoplasmic" evidence="2">
    <location>
        <begin position="299"/>
        <end position="426"/>
    </location>
</feature>
<feature type="site" description="Cleavage; by CASP3 or CASP7" evidence="11">
    <location>
        <begin position="375"/>
        <end position="378"/>
    </location>
</feature>
<feature type="modified residue" description="S-nitrosocysteine" evidence="6">
    <location>
        <position position="40"/>
    </location>
</feature>
<feature type="modified residue" description="Phosphotyrosine" evidence="7">
    <location>
        <position position="198"/>
    </location>
</feature>
<feature type="modified residue" description="S-nitrosocysteine" evidence="6">
    <location>
        <position position="346"/>
    </location>
</feature>
<feature type="glycosylation site" description="N-linked (GlcNAc...) asparagine" evidence="4">
    <location>
        <position position="254"/>
    </location>
</feature>
<feature type="disulfide bond" evidence="1">
    <location>
        <begin position="66"/>
        <end position="264"/>
    </location>
</feature>
<feature type="disulfide bond" evidence="1">
    <location>
        <begin position="84"/>
        <end position="245"/>
    </location>
</feature>
<feature type="mutagenesis site" description="Abolishes S-nitrosylation; when associated with Ala-346." evidence="6">
    <original>C</original>
    <variation>A</variation>
    <location>
        <position position="40"/>
    </location>
</feature>
<feature type="mutagenesis site" description="Impairs glycosylation." evidence="4">
    <original>N</original>
    <variation>Q</variation>
    <location>
        <position position="254"/>
    </location>
</feature>
<feature type="mutagenesis site" description="Abolishes S-nitrosylation; when associated with Ala-40." evidence="6">
    <original>C</original>
    <variation>A</variation>
    <location>
        <position position="346"/>
    </location>
</feature>
<feature type="mutagenesis site" description="No effect on S-nitrosylation." evidence="6">
    <original>C</original>
    <variation>A</variation>
    <location>
        <position position="426"/>
    </location>
</feature>
<feature type="sequence conflict" description="In Ref. 1; AAF75838." evidence="10" ref="1">
    <original>I</original>
    <variation>T</variation>
    <location>
        <position position="296"/>
    </location>
</feature>
<feature type="sequence conflict" description="In Ref. 1; AAF75838." evidence="10" ref="1">
    <original>A</original>
    <variation>R</variation>
    <location>
        <position position="409"/>
    </location>
</feature>
<feature type="sequence conflict" description="In Ref. 1; AAF75838." evidence="10" ref="1">
    <original>LNPSC</original>
    <variation>CESVLLMVSFLNFKPVTSVADAPLLDL</variation>
    <location>
        <begin position="422"/>
        <end position="426"/>
    </location>
</feature>
<feature type="helix" evidence="13">
    <location>
        <begin position="33"/>
        <end position="60"/>
    </location>
</feature>
<feature type="strand" evidence="13">
    <location>
        <begin position="63"/>
        <end position="67"/>
    </location>
</feature>
<feature type="helix" evidence="13">
    <location>
        <begin position="74"/>
        <end position="86"/>
    </location>
</feature>
<feature type="helix" evidence="13">
    <location>
        <begin position="87"/>
        <end position="89"/>
    </location>
</feature>
<feature type="helix" evidence="13">
    <location>
        <begin position="100"/>
        <end position="107"/>
    </location>
</feature>
<feature type="helix" evidence="13">
    <location>
        <begin position="109"/>
        <end position="129"/>
    </location>
</feature>
<feature type="helix" evidence="13">
    <location>
        <begin position="132"/>
        <end position="145"/>
    </location>
</feature>
<feature type="helix" evidence="13">
    <location>
        <begin position="196"/>
        <end position="204"/>
    </location>
</feature>
<feature type="helix" evidence="13">
    <location>
        <begin position="208"/>
        <end position="235"/>
    </location>
</feature>
<feature type="helix" evidence="13">
    <location>
        <begin position="238"/>
        <end position="241"/>
    </location>
</feature>
<feature type="strand" evidence="13">
    <location>
        <begin position="242"/>
        <end position="245"/>
    </location>
</feature>
<feature type="helix" evidence="13">
    <location>
        <begin position="250"/>
        <end position="252"/>
    </location>
</feature>
<feature type="strand" evidence="13">
    <location>
        <begin position="262"/>
        <end position="266"/>
    </location>
</feature>
<feature type="helix" evidence="13">
    <location>
        <begin position="269"/>
        <end position="294"/>
    </location>
</feature>
<feature type="turn" evidence="13">
    <location>
        <begin position="296"/>
        <end position="299"/>
    </location>
</feature>
<feature type="helix" evidence="13">
    <location>
        <begin position="326"/>
        <end position="337"/>
    </location>
</feature>
<feature type="helix" evidence="13">
    <location>
        <begin position="338"/>
        <end position="340"/>
    </location>
</feature>
<feature type="helix" evidence="13">
    <location>
        <begin position="342"/>
        <end position="348"/>
    </location>
</feature>
<name>PANX1_MOUSE</name>
<accession>Q9JIP4</accession>
<accession>Q5RL18</accession>
<accession>Q9CXS7</accession>
<proteinExistence type="evidence at protein level"/>